<protein>
    <recommendedName>
        <fullName>Lactosylceramide 1,3-N-acetyl-beta-D-glucosaminyltransferase A</fullName>
        <ecNumber evidence="2">2.4.1.206</ecNumber>
    </recommendedName>
    <alternativeName>
        <fullName>Lactotriaosylceramide synthase A</fullName>
        <shortName>Lc(3)Cer synthase A</shortName>
        <shortName>Lc3 synthase A</shortName>
    </alternativeName>
    <alternativeName>
        <fullName>UDP-GlcNAc:beta-Gal beta-1,3-N-acetylglucosaminyltransferase 5A</fullName>
        <shortName>BGnT-5A</shortName>
        <shortName>Beta-1,3-Gn-T5A</shortName>
        <shortName>Beta-1,3-N-acetylglucosaminyltransferase 5A</shortName>
        <shortName>Beta3Gn-T5A</shortName>
    </alternativeName>
</protein>
<dbReference type="EC" id="2.4.1.206" evidence="2"/>
<dbReference type="EMBL" id="BC088967">
    <property type="protein sequence ID" value="AAH88967.1"/>
    <property type="molecule type" value="mRNA"/>
</dbReference>
<dbReference type="RefSeq" id="NP_001088982.1">
    <property type="nucleotide sequence ID" value="NM_001095513.1"/>
</dbReference>
<dbReference type="SMR" id="Q5HZL5"/>
<dbReference type="CAZy" id="GT31">
    <property type="family name" value="Glycosyltransferase Family 31"/>
</dbReference>
<dbReference type="GlyCosmos" id="Q5HZL5">
    <property type="glycosylation" value="3 sites, No reported glycans"/>
</dbReference>
<dbReference type="DNASU" id="496364"/>
<dbReference type="GeneID" id="496364"/>
<dbReference type="KEGG" id="xla:496364"/>
<dbReference type="AGR" id="Xenbase:XB-GENE-955716"/>
<dbReference type="CTD" id="496364"/>
<dbReference type="Xenbase" id="XB-GENE-955716">
    <property type="gene designation" value="b3gnt5.L"/>
</dbReference>
<dbReference type="OMA" id="VQLFATC"/>
<dbReference type="OrthoDB" id="115198at2759"/>
<dbReference type="UniPathway" id="UPA00378"/>
<dbReference type="Proteomes" id="UP000186698">
    <property type="component" value="Chromosome 5L"/>
</dbReference>
<dbReference type="Bgee" id="496364">
    <property type="expression patterns" value="Expressed in egg cell and 19 other cell types or tissues"/>
</dbReference>
<dbReference type="GO" id="GO:0000139">
    <property type="term" value="C:Golgi membrane"/>
    <property type="evidence" value="ECO:0000318"/>
    <property type="project" value="GO_Central"/>
</dbReference>
<dbReference type="GO" id="GO:0016757">
    <property type="term" value="F:glycosyltransferase activity"/>
    <property type="evidence" value="ECO:0000318"/>
    <property type="project" value="GO_Central"/>
</dbReference>
<dbReference type="GO" id="GO:0047256">
    <property type="term" value="F:lactosylceramide 1,3-N-acetyl-beta-D-glucosaminyltransferase activity"/>
    <property type="evidence" value="ECO:0007669"/>
    <property type="project" value="UniProtKB-EC"/>
</dbReference>
<dbReference type="GO" id="GO:0006493">
    <property type="term" value="P:protein O-linked glycosylation"/>
    <property type="evidence" value="ECO:0000318"/>
    <property type="project" value="GO_Central"/>
</dbReference>
<dbReference type="FunFam" id="3.90.550.50:FF:000019">
    <property type="entry name" value="Hexosyltransferase"/>
    <property type="match status" value="1"/>
</dbReference>
<dbReference type="Gene3D" id="3.90.550.50">
    <property type="match status" value="1"/>
</dbReference>
<dbReference type="InterPro" id="IPR002659">
    <property type="entry name" value="Glyco_trans_31"/>
</dbReference>
<dbReference type="PANTHER" id="PTHR11214">
    <property type="entry name" value="BETA-1,3-N-ACETYLGLUCOSAMINYLTRANSFERASE"/>
    <property type="match status" value="1"/>
</dbReference>
<dbReference type="PANTHER" id="PTHR11214:SF21">
    <property type="entry name" value="LACTOSYLCERAMIDE 1,3-N-ACETYL-BETA-D-GLUCOSAMINYLTRANSFERASE"/>
    <property type="match status" value="1"/>
</dbReference>
<dbReference type="Pfam" id="PF01762">
    <property type="entry name" value="Galactosyl_T"/>
    <property type="match status" value="1"/>
</dbReference>
<name>B3G5A_XENLA</name>
<reference key="1">
    <citation type="submission" date="2005-01" db="EMBL/GenBank/DDBJ databases">
        <authorList>
            <consortium name="NIH - Xenopus Gene Collection (XGC) project"/>
        </authorList>
    </citation>
    <scope>NUCLEOTIDE SEQUENCE [LARGE SCALE MRNA]</scope>
    <source>
        <tissue>Egg</tissue>
    </source>
</reference>
<keyword id="KW-0325">Glycoprotein</keyword>
<keyword id="KW-0328">Glycosyltransferase</keyword>
<keyword id="KW-0333">Golgi apparatus</keyword>
<keyword id="KW-0472">Membrane</keyword>
<keyword id="KW-1185">Reference proteome</keyword>
<keyword id="KW-0735">Signal-anchor</keyword>
<keyword id="KW-0808">Transferase</keyword>
<keyword id="KW-0812">Transmembrane</keyword>
<keyword id="KW-1133">Transmembrane helix</keyword>
<accession>Q5HZL5</accession>
<organism>
    <name type="scientific">Xenopus laevis</name>
    <name type="common">African clawed frog</name>
    <dbReference type="NCBI Taxonomy" id="8355"/>
    <lineage>
        <taxon>Eukaryota</taxon>
        <taxon>Metazoa</taxon>
        <taxon>Chordata</taxon>
        <taxon>Craniata</taxon>
        <taxon>Vertebrata</taxon>
        <taxon>Euteleostomi</taxon>
        <taxon>Amphibia</taxon>
        <taxon>Batrachia</taxon>
        <taxon>Anura</taxon>
        <taxon>Pipoidea</taxon>
        <taxon>Pipidae</taxon>
        <taxon>Xenopodinae</taxon>
        <taxon>Xenopus</taxon>
        <taxon>Xenopus</taxon>
    </lineage>
</organism>
<comment type="function">
    <text evidence="3">Beta-1,3-N-acetylglucosaminyltransferase that plays a key role in the synthesis of lacto- or neolacto-series carbohydrate chains on glycolipids.</text>
</comment>
<comment type="catalytic activity">
    <reaction evidence="3">
        <text>a beta-D-Gal-(1-&gt;4)-beta-D-Glc-(1&lt;-&gt;1)-Cer(d18:1(4E)) + UDP-N-acetyl-alpha-D-glucosamine = a beta-D-GlcNAc-(1-&gt;3)-beta-D-Gal-(1-&gt;4)-beta-D-Glc-(1&lt;-&gt;1)-Cer(d18:1(4E)) + UDP + H(+)</text>
        <dbReference type="Rhea" id="RHEA:13905"/>
        <dbReference type="ChEBI" id="CHEBI:15378"/>
        <dbReference type="ChEBI" id="CHEBI:17103"/>
        <dbReference type="ChEBI" id="CHEBI:17950"/>
        <dbReference type="ChEBI" id="CHEBI:57705"/>
        <dbReference type="ChEBI" id="CHEBI:58223"/>
        <dbReference type="EC" id="2.4.1.206"/>
    </reaction>
    <physiologicalReaction direction="left-to-right" evidence="3">
        <dbReference type="Rhea" id="RHEA:13906"/>
    </physiologicalReaction>
</comment>
<comment type="catalytic activity">
    <reaction evidence="3">
        <text>a neolactoside nLc4Cer(d18:1(4E)) + UDP-N-acetyl-alpha-D-glucosamine = a neolactoside IV(3)-beta-GlcNAc-nLc4Cer(d18:1(4E)) + UDP + H(+)</text>
        <dbReference type="Rhea" id="RHEA:23004"/>
        <dbReference type="ChEBI" id="CHEBI:15378"/>
        <dbReference type="ChEBI" id="CHEBI:17006"/>
        <dbReference type="ChEBI" id="CHEBI:57705"/>
        <dbReference type="ChEBI" id="CHEBI:58223"/>
        <dbReference type="ChEBI" id="CHEBI:142448"/>
    </reaction>
    <physiologicalReaction direction="left-to-right" evidence="3">
        <dbReference type="Rhea" id="RHEA:23005"/>
    </physiologicalReaction>
</comment>
<comment type="pathway">
    <text>Protein modification; protein glycosylation.</text>
</comment>
<comment type="subcellular location">
    <subcellularLocation>
        <location evidence="1">Golgi apparatus membrane</location>
        <topology evidence="1">Single-pass type II membrane protein</topology>
    </subcellularLocation>
</comment>
<comment type="similarity">
    <text evidence="5">Belongs to the glycosyltransferase 31 family.</text>
</comment>
<proteinExistence type="evidence at transcript level"/>
<evidence type="ECO:0000250" key="1"/>
<evidence type="ECO:0000250" key="2">
    <source>
        <dbReference type="UniProtKB" id="Q8BGY6"/>
    </source>
</evidence>
<evidence type="ECO:0000250" key="3">
    <source>
        <dbReference type="UniProtKB" id="Q9BYG0"/>
    </source>
</evidence>
<evidence type="ECO:0000255" key="4"/>
<evidence type="ECO:0000305" key="5"/>
<feature type="chain" id="PRO_0000289215" description="Lactosylceramide 1,3-N-acetyl-beta-D-glucosaminyltransferase A">
    <location>
        <begin position="1"/>
        <end position="377"/>
    </location>
</feature>
<feature type="topological domain" description="Cytoplasmic" evidence="4">
    <location>
        <begin position="1"/>
        <end position="12"/>
    </location>
</feature>
<feature type="transmembrane region" description="Helical; Signal-anchor for type II membrane protein" evidence="4">
    <location>
        <begin position="13"/>
        <end position="30"/>
    </location>
</feature>
<feature type="topological domain" description="Lumenal" evidence="4">
    <location>
        <begin position="31"/>
        <end position="377"/>
    </location>
</feature>
<feature type="glycosylation site" description="N-linked (GlcNAc...) asparagine" evidence="4">
    <location>
        <position position="56"/>
    </location>
</feature>
<feature type="glycosylation site" description="N-linked (GlcNAc...) asparagine" evidence="4">
    <location>
        <position position="167"/>
    </location>
</feature>
<feature type="glycosylation site" description="N-linked (GlcNAc...) asparagine" evidence="4">
    <location>
        <position position="275"/>
    </location>
</feature>
<gene>
    <name type="primary">b3gnt5-a</name>
</gene>
<sequence length="377" mass="43635">MLISARRLRRCQFLQLLASCFVLSLMALLVQEDNSLISHVKSYSYRYLINSYDFVNVSLSIPRDRLDGAASYRYLLNNRHICLNEDVLLLLFVKTAPENRRRRDAIRNTWGNEDFIRSQYDANIKVVFALGAEGDPVKSREIQQDLVNENKRFKDLIQQDFSDTFHNLTLKLLLQFGWVNSFCPSAKFIMSADDDIFVHTPNLVSYLKSLPIETQDFWIGRVHRGSPPIRRKTSKYYVPYEMYPWSSYPDYTAGAAYVVSRDVAAKVYEASQTLNTSLYIDDVFMGICANKMGLVPQYHVFFSGEGKSPYHPCIYNKMMTSHGHLDDLDYLWRQAIDPNVKSISSGFWGNLYCRFVNIMLLCRISYVDTYPCSAAWS</sequence>